<gene>
    <name type="primary">Tmem183</name>
    <name type="synonym">Tmem183a</name>
    <name type="ORF">MNCb-2755</name>
</gene>
<dbReference type="EMBL" id="AB041592">
    <property type="protein sequence ID" value="BAA95075.1"/>
    <property type="molecule type" value="mRNA"/>
</dbReference>
<dbReference type="EMBL" id="AK004922">
    <property type="protein sequence ID" value="BAB23673.1"/>
    <property type="molecule type" value="mRNA"/>
</dbReference>
<dbReference type="EMBL" id="AK007779">
    <property type="protein sequence ID" value="BAB25250.1"/>
    <property type="molecule type" value="mRNA"/>
</dbReference>
<dbReference type="EMBL" id="AK152852">
    <property type="protein sequence ID" value="BAE31545.1"/>
    <property type="molecule type" value="mRNA"/>
</dbReference>
<dbReference type="EMBL" id="AK168331">
    <property type="protein sequence ID" value="BAE40269.1"/>
    <property type="molecule type" value="mRNA"/>
</dbReference>
<dbReference type="EMBL" id="BC003210">
    <property type="protein sequence ID" value="AAH03210.1"/>
    <property type="molecule type" value="mRNA"/>
</dbReference>
<dbReference type="CCDS" id="CCDS35714.1"/>
<dbReference type="RefSeq" id="NP_001035950.1">
    <property type="nucleotide sequence ID" value="NM_001042485.1"/>
</dbReference>
<dbReference type="RefSeq" id="NP_065613.1">
    <property type="nucleotide sequence ID" value="NM_020588.2"/>
</dbReference>
<dbReference type="BioGRID" id="208296">
    <property type="interactions" value="1"/>
</dbReference>
<dbReference type="FunCoup" id="Q9JJB9">
    <property type="interactions" value="409"/>
</dbReference>
<dbReference type="STRING" id="10090.ENSMUSP00000046786"/>
<dbReference type="iPTMnet" id="Q9JJB9"/>
<dbReference type="PhosphoSitePlus" id="Q9JJB9"/>
<dbReference type="PaxDb" id="10090-ENSMUSP00000046786"/>
<dbReference type="ProteomicsDB" id="259542"/>
<dbReference type="Antibodypedia" id="77926">
    <property type="antibodies" value="4 antibodies from 4 providers"/>
</dbReference>
<dbReference type="DNASU" id="57439"/>
<dbReference type="Ensembl" id="ENSMUST00000049470.11">
    <property type="protein sequence ID" value="ENSMUSP00000046786.5"/>
    <property type="gene ID" value="ENSMUSG00000042305.13"/>
</dbReference>
<dbReference type="GeneID" id="57439"/>
<dbReference type="KEGG" id="mmu:57439"/>
<dbReference type="UCSC" id="uc007crq.1">
    <property type="organism name" value="mouse"/>
</dbReference>
<dbReference type="AGR" id="MGI:1914729"/>
<dbReference type="CTD" id="92703"/>
<dbReference type="MGI" id="MGI:1914729">
    <property type="gene designation" value="Tmem183a"/>
</dbReference>
<dbReference type="VEuPathDB" id="HostDB:ENSMUSG00000042305"/>
<dbReference type="eggNOG" id="ENOG502QS4U">
    <property type="taxonomic scope" value="Eukaryota"/>
</dbReference>
<dbReference type="GeneTree" id="ENSGT00390000009310"/>
<dbReference type="HOGENOM" id="CLU_061444_1_0_1"/>
<dbReference type="InParanoid" id="Q9JJB9"/>
<dbReference type="OMA" id="RFKSKCC"/>
<dbReference type="OrthoDB" id="5955317at2759"/>
<dbReference type="PhylomeDB" id="Q9JJB9"/>
<dbReference type="TreeFam" id="TF323300"/>
<dbReference type="BioGRID-ORCS" id="57439">
    <property type="hits" value="1 hit in 78 CRISPR screens"/>
</dbReference>
<dbReference type="ChiTaRS" id="Tmem183a">
    <property type="organism name" value="mouse"/>
</dbReference>
<dbReference type="PRO" id="PR:Q9JJB9"/>
<dbReference type="Proteomes" id="UP000000589">
    <property type="component" value="Chromosome 1"/>
</dbReference>
<dbReference type="RNAct" id="Q9JJB9">
    <property type="molecule type" value="protein"/>
</dbReference>
<dbReference type="Bgee" id="ENSMUSG00000042305">
    <property type="expression patterns" value="Expressed in prostate gland ventral lobe and 257 other cell types or tissues"/>
</dbReference>
<dbReference type="ExpressionAtlas" id="Q9JJB9">
    <property type="expression patterns" value="baseline and differential"/>
</dbReference>
<dbReference type="GO" id="GO:0016020">
    <property type="term" value="C:membrane"/>
    <property type="evidence" value="ECO:0007669"/>
    <property type="project" value="UniProtKB-SubCell"/>
</dbReference>
<dbReference type="InterPro" id="IPR036047">
    <property type="entry name" value="F-box-like_dom_sf"/>
</dbReference>
<dbReference type="InterPro" id="IPR026509">
    <property type="entry name" value="TMEM183"/>
</dbReference>
<dbReference type="PANTHER" id="PTHR20988">
    <property type="entry name" value="TRANSMEMBRANE PROTEIN 183A-RELATED"/>
    <property type="match status" value="1"/>
</dbReference>
<dbReference type="PANTHER" id="PTHR20988:SF2">
    <property type="entry name" value="TRANSMEMBRANE PROTEIN 183A-RELATED"/>
    <property type="match status" value="1"/>
</dbReference>
<dbReference type="SUPFAM" id="SSF81383">
    <property type="entry name" value="F-box domain"/>
    <property type="match status" value="1"/>
</dbReference>
<name>TM183_MOUSE</name>
<feature type="chain" id="PRO_0000089252" description="Transmembrane protein 183">
    <location>
        <begin position="1"/>
        <end position="375"/>
    </location>
</feature>
<feature type="transmembrane region" description="Helical" evidence="1">
    <location>
        <begin position="299"/>
        <end position="319"/>
    </location>
</feature>
<feature type="region of interest" description="Disordered" evidence="2">
    <location>
        <begin position="1"/>
        <end position="21"/>
    </location>
</feature>
<feature type="region of interest" description="Disordered" evidence="2">
    <location>
        <begin position="94"/>
        <end position="128"/>
    </location>
</feature>
<feature type="compositionally biased region" description="Acidic residues" evidence="2">
    <location>
        <begin position="95"/>
        <end position="106"/>
    </location>
</feature>
<feature type="sequence conflict" description="In Ref. 3; AAH03210." evidence="3" ref="3">
    <location>
        <position position="123"/>
    </location>
</feature>
<sequence>MARGSGQLGGPHRDTVTMPKRGKRLKFRAHDACSGRVTVADYANSDPAVVRSGRVKKAVANAIQQEVKSLCGLEASQVPAEEALSGVGEPCDILDSSDEMDAQEESTQERSVSRKKKSKRHKEDPDGTGEEYPMDIWLLLASYIRPEDIVNFSLICKNAWTVTCTAAFWTRLYRRHYTLDASLPLRLRPESMEKLRCLRACVIRSLYHMYEPFAARISKNPAIPESTPSTLKNSKCLLFWCRKIVGNRQEPMWEFNFKFKKQSPRLKSKCMERLQPPIQYQDVHTNPDQDCCLLQVTTLNFIFIPIVMGMIFTLFTINVSTDMRHHRVRLVFQDSPVRGGQNLRSEQGVQVVLDPVHSVRLFDWWHPQYPFSLRA</sequence>
<reference key="1">
    <citation type="submission" date="2000-04" db="EMBL/GenBank/DDBJ databases">
        <title>Isolation of full-length cDNA clones from mouse brain cDNA library made by oligo-capping method.</title>
        <authorList>
            <person name="Osada N."/>
            <person name="Kusuda J."/>
            <person name="Tanuma R."/>
            <person name="Ito A."/>
            <person name="Hirata M."/>
            <person name="Sugano S."/>
            <person name="Hashimoto K."/>
        </authorList>
    </citation>
    <scope>NUCLEOTIDE SEQUENCE [LARGE SCALE MRNA]</scope>
    <source>
        <strain>C57BL/6J</strain>
        <tissue>Brain</tissue>
    </source>
</reference>
<reference key="2">
    <citation type="journal article" date="2005" name="Science">
        <title>The transcriptional landscape of the mammalian genome.</title>
        <authorList>
            <person name="Carninci P."/>
            <person name="Kasukawa T."/>
            <person name="Katayama S."/>
            <person name="Gough J."/>
            <person name="Frith M.C."/>
            <person name="Maeda N."/>
            <person name="Oyama R."/>
            <person name="Ravasi T."/>
            <person name="Lenhard B."/>
            <person name="Wells C."/>
            <person name="Kodzius R."/>
            <person name="Shimokawa K."/>
            <person name="Bajic V.B."/>
            <person name="Brenner S.E."/>
            <person name="Batalov S."/>
            <person name="Forrest A.R."/>
            <person name="Zavolan M."/>
            <person name="Davis M.J."/>
            <person name="Wilming L.G."/>
            <person name="Aidinis V."/>
            <person name="Allen J.E."/>
            <person name="Ambesi-Impiombato A."/>
            <person name="Apweiler R."/>
            <person name="Aturaliya R.N."/>
            <person name="Bailey T.L."/>
            <person name="Bansal M."/>
            <person name="Baxter L."/>
            <person name="Beisel K.W."/>
            <person name="Bersano T."/>
            <person name="Bono H."/>
            <person name="Chalk A.M."/>
            <person name="Chiu K.P."/>
            <person name="Choudhary V."/>
            <person name="Christoffels A."/>
            <person name="Clutterbuck D.R."/>
            <person name="Crowe M.L."/>
            <person name="Dalla E."/>
            <person name="Dalrymple B.P."/>
            <person name="de Bono B."/>
            <person name="Della Gatta G."/>
            <person name="di Bernardo D."/>
            <person name="Down T."/>
            <person name="Engstrom P."/>
            <person name="Fagiolini M."/>
            <person name="Faulkner G."/>
            <person name="Fletcher C.F."/>
            <person name="Fukushima T."/>
            <person name="Furuno M."/>
            <person name="Futaki S."/>
            <person name="Gariboldi M."/>
            <person name="Georgii-Hemming P."/>
            <person name="Gingeras T.R."/>
            <person name="Gojobori T."/>
            <person name="Green R.E."/>
            <person name="Gustincich S."/>
            <person name="Harbers M."/>
            <person name="Hayashi Y."/>
            <person name="Hensch T.K."/>
            <person name="Hirokawa N."/>
            <person name="Hill D."/>
            <person name="Huminiecki L."/>
            <person name="Iacono M."/>
            <person name="Ikeo K."/>
            <person name="Iwama A."/>
            <person name="Ishikawa T."/>
            <person name="Jakt M."/>
            <person name="Kanapin A."/>
            <person name="Katoh M."/>
            <person name="Kawasawa Y."/>
            <person name="Kelso J."/>
            <person name="Kitamura H."/>
            <person name="Kitano H."/>
            <person name="Kollias G."/>
            <person name="Krishnan S.P."/>
            <person name="Kruger A."/>
            <person name="Kummerfeld S.K."/>
            <person name="Kurochkin I.V."/>
            <person name="Lareau L.F."/>
            <person name="Lazarevic D."/>
            <person name="Lipovich L."/>
            <person name="Liu J."/>
            <person name="Liuni S."/>
            <person name="McWilliam S."/>
            <person name="Madan Babu M."/>
            <person name="Madera M."/>
            <person name="Marchionni L."/>
            <person name="Matsuda H."/>
            <person name="Matsuzawa S."/>
            <person name="Miki H."/>
            <person name="Mignone F."/>
            <person name="Miyake S."/>
            <person name="Morris K."/>
            <person name="Mottagui-Tabar S."/>
            <person name="Mulder N."/>
            <person name="Nakano N."/>
            <person name="Nakauchi H."/>
            <person name="Ng P."/>
            <person name="Nilsson R."/>
            <person name="Nishiguchi S."/>
            <person name="Nishikawa S."/>
            <person name="Nori F."/>
            <person name="Ohara O."/>
            <person name="Okazaki Y."/>
            <person name="Orlando V."/>
            <person name="Pang K.C."/>
            <person name="Pavan W.J."/>
            <person name="Pavesi G."/>
            <person name="Pesole G."/>
            <person name="Petrovsky N."/>
            <person name="Piazza S."/>
            <person name="Reed J."/>
            <person name="Reid J.F."/>
            <person name="Ring B.Z."/>
            <person name="Ringwald M."/>
            <person name="Rost B."/>
            <person name="Ruan Y."/>
            <person name="Salzberg S.L."/>
            <person name="Sandelin A."/>
            <person name="Schneider C."/>
            <person name="Schoenbach C."/>
            <person name="Sekiguchi K."/>
            <person name="Semple C.A."/>
            <person name="Seno S."/>
            <person name="Sessa L."/>
            <person name="Sheng Y."/>
            <person name="Shibata Y."/>
            <person name="Shimada H."/>
            <person name="Shimada K."/>
            <person name="Silva D."/>
            <person name="Sinclair B."/>
            <person name="Sperling S."/>
            <person name="Stupka E."/>
            <person name="Sugiura K."/>
            <person name="Sultana R."/>
            <person name="Takenaka Y."/>
            <person name="Taki K."/>
            <person name="Tammoja K."/>
            <person name="Tan S.L."/>
            <person name="Tang S."/>
            <person name="Taylor M.S."/>
            <person name="Tegner J."/>
            <person name="Teichmann S.A."/>
            <person name="Ueda H.R."/>
            <person name="van Nimwegen E."/>
            <person name="Verardo R."/>
            <person name="Wei C.L."/>
            <person name="Yagi K."/>
            <person name="Yamanishi H."/>
            <person name="Zabarovsky E."/>
            <person name="Zhu S."/>
            <person name="Zimmer A."/>
            <person name="Hide W."/>
            <person name="Bult C."/>
            <person name="Grimmond S.M."/>
            <person name="Teasdale R.D."/>
            <person name="Liu E.T."/>
            <person name="Brusic V."/>
            <person name="Quackenbush J."/>
            <person name="Wahlestedt C."/>
            <person name="Mattick J.S."/>
            <person name="Hume D.A."/>
            <person name="Kai C."/>
            <person name="Sasaki D."/>
            <person name="Tomaru Y."/>
            <person name="Fukuda S."/>
            <person name="Kanamori-Katayama M."/>
            <person name="Suzuki M."/>
            <person name="Aoki J."/>
            <person name="Arakawa T."/>
            <person name="Iida J."/>
            <person name="Imamura K."/>
            <person name="Itoh M."/>
            <person name="Kato T."/>
            <person name="Kawaji H."/>
            <person name="Kawagashira N."/>
            <person name="Kawashima T."/>
            <person name="Kojima M."/>
            <person name="Kondo S."/>
            <person name="Konno H."/>
            <person name="Nakano K."/>
            <person name="Ninomiya N."/>
            <person name="Nishio T."/>
            <person name="Okada M."/>
            <person name="Plessy C."/>
            <person name="Shibata K."/>
            <person name="Shiraki T."/>
            <person name="Suzuki S."/>
            <person name="Tagami M."/>
            <person name="Waki K."/>
            <person name="Watahiki A."/>
            <person name="Okamura-Oho Y."/>
            <person name="Suzuki H."/>
            <person name="Kawai J."/>
            <person name="Hayashizaki Y."/>
        </authorList>
    </citation>
    <scope>NUCLEOTIDE SEQUENCE [LARGE SCALE MRNA]</scope>
    <source>
        <strain>C57BL/6J</strain>
        <strain>DBA/2J</strain>
        <tissue>Bone marrow</tissue>
        <tissue>Liver</tissue>
        <tissue>Pancreas</tissue>
    </source>
</reference>
<reference key="3">
    <citation type="journal article" date="2004" name="Genome Res.">
        <title>The status, quality, and expansion of the NIH full-length cDNA project: the Mammalian Gene Collection (MGC).</title>
        <authorList>
            <consortium name="The MGC Project Team"/>
        </authorList>
    </citation>
    <scope>NUCLEOTIDE SEQUENCE [LARGE SCALE MRNA]</scope>
    <source>
        <strain>FVB/N</strain>
        <tissue>Mammary gland</tissue>
    </source>
</reference>
<organism>
    <name type="scientific">Mus musculus</name>
    <name type="common">Mouse</name>
    <dbReference type="NCBI Taxonomy" id="10090"/>
    <lineage>
        <taxon>Eukaryota</taxon>
        <taxon>Metazoa</taxon>
        <taxon>Chordata</taxon>
        <taxon>Craniata</taxon>
        <taxon>Vertebrata</taxon>
        <taxon>Euteleostomi</taxon>
        <taxon>Mammalia</taxon>
        <taxon>Eutheria</taxon>
        <taxon>Euarchontoglires</taxon>
        <taxon>Glires</taxon>
        <taxon>Rodentia</taxon>
        <taxon>Myomorpha</taxon>
        <taxon>Muroidea</taxon>
        <taxon>Muridae</taxon>
        <taxon>Murinae</taxon>
        <taxon>Mus</taxon>
        <taxon>Mus</taxon>
    </lineage>
</organism>
<accession>Q9JJB9</accession>
<accession>Q3THC8</accession>
<accession>Q99LK6</accession>
<evidence type="ECO:0000255" key="1"/>
<evidence type="ECO:0000256" key="2">
    <source>
        <dbReference type="SAM" id="MobiDB-lite"/>
    </source>
</evidence>
<evidence type="ECO:0000305" key="3"/>
<comment type="subcellular location">
    <subcellularLocation>
        <location evidence="3">Membrane</location>
        <topology evidence="3">Single-pass membrane protein</topology>
    </subcellularLocation>
</comment>
<comment type="similarity">
    <text evidence="3">Belongs to the TMEM183 family.</text>
</comment>
<proteinExistence type="evidence at transcript level"/>
<protein>
    <recommendedName>
        <fullName>Transmembrane protein 183</fullName>
    </recommendedName>
</protein>
<keyword id="KW-0472">Membrane</keyword>
<keyword id="KW-1185">Reference proteome</keyword>
<keyword id="KW-0812">Transmembrane</keyword>
<keyword id="KW-1133">Transmembrane helix</keyword>